<sequence>MKNKSKYREMSYKELVSKRNDLKQKYMDLRFQAVVGHLDNPLEKRSMRREIAMLNTFIRQKELAGEGAN</sequence>
<dbReference type="EMBL" id="AE017226">
    <property type="protein sequence ID" value="AAS11266.1"/>
    <property type="molecule type" value="Genomic_DNA"/>
</dbReference>
<dbReference type="RefSeq" id="NP_971385.1">
    <property type="nucleotide sequence ID" value="NC_002967.9"/>
</dbReference>
<dbReference type="RefSeq" id="WP_002670007.1">
    <property type="nucleotide sequence ID" value="NC_002967.9"/>
</dbReference>
<dbReference type="SMR" id="Q73PM4"/>
<dbReference type="STRING" id="243275.TDE_0775"/>
<dbReference type="PaxDb" id="243275-TDE_0775"/>
<dbReference type="GeneID" id="2740653"/>
<dbReference type="KEGG" id="tde:TDE_0775"/>
<dbReference type="PATRIC" id="fig|243275.7.peg.748"/>
<dbReference type="eggNOG" id="COG0255">
    <property type="taxonomic scope" value="Bacteria"/>
</dbReference>
<dbReference type="HOGENOM" id="CLU_158491_5_0_12"/>
<dbReference type="OrthoDB" id="371096at2"/>
<dbReference type="Proteomes" id="UP000008212">
    <property type="component" value="Chromosome"/>
</dbReference>
<dbReference type="GO" id="GO:1990904">
    <property type="term" value="C:ribonucleoprotein complex"/>
    <property type="evidence" value="ECO:0007669"/>
    <property type="project" value="UniProtKB-KW"/>
</dbReference>
<dbReference type="GO" id="GO:0005840">
    <property type="term" value="C:ribosome"/>
    <property type="evidence" value="ECO:0007669"/>
    <property type="project" value="UniProtKB-KW"/>
</dbReference>
<dbReference type="GO" id="GO:0003735">
    <property type="term" value="F:structural constituent of ribosome"/>
    <property type="evidence" value="ECO:0007669"/>
    <property type="project" value="InterPro"/>
</dbReference>
<dbReference type="GO" id="GO:0006412">
    <property type="term" value="P:translation"/>
    <property type="evidence" value="ECO:0007669"/>
    <property type="project" value="UniProtKB-UniRule"/>
</dbReference>
<dbReference type="CDD" id="cd00427">
    <property type="entry name" value="Ribosomal_L29_HIP"/>
    <property type="match status" value="1"/>
</dbReference>
<dbReference type="Gene3D" id="1.10.287.310">
    <property type="match status" value="1"/>
</dbReference>
<dbReference type="HAMAP" id="MF_00374">
    <property type="entry name" value="Ribosomal_uL29"/>
    <property type="match status" value="1"/>
</dbReference>
<dbReference type="InterPro" id="IPR001854">
    <property type="entry name" value="Ribosomal_uL29"/>
</dbReference>
<dbReference type="InterPro" id="IPR036049">
    <property type="entry name" value="Ribosomal_uL29_sf"/>
</dbReference>
<dbReference type="NCBIfam" id="TIGR00012">
    <property type="entry name" value="L29"/>
    <property type="match status" value="1"/>
</dbReference>
<dbReference type="Pfam" id="PF00831">
    <property type="entry name" value="Ribosomal_L29"/>
    <property type="match status" value="1"/>
</dbReference>
<dbReference type="SUPFAM" id="SSF46561">
    <property type="entry name" value="Ribosomal protein L29 (L29p)"/>
    <property type="match status" value="1"/>
</dbReference>
<gene>
    <name evidence="1" type="primary">rpmC</name>
    <name type="ordered locus">TDE_0775</name>
</gene>
<evidence type="ECO:0000255" key="1">
    <source>
        <dbReference type="HAMAP-Rule" id="MF_00374"/>
    </source>
</evidence>
<evidence type="ECO:0000305" key="2"/>
<keyword id="KW-1185">Reference proteome</keyword>
<keyword id="KW-0687">Ribonucleoprotein</keyword>
<keyword id="KW-0689">Ribosomal protein</keyword>
<comment type="similarity">
    <text evidence="1">Belongs to the universal ribosomal protein uL29 family.</text>
</comment>
<protein>
    <recommendedName>
        <fullName evidence="1">Large ribosomal subunit protein uL29</fullName>
    </recommendedName>
    <alternativeName>
        <fullName evidence="2">50S ribosomal protein L29</fullName>
    </alternativeName>
</protein>
<reference key="1">
    <citation type="journal article" date="2004" name="Proc. Natl. Acad. Sci. U.S.A.">
        <title>Comparison of the genome of the oral pathogen Treponema denticola with other spirochete genomes.</title>
        <authorList>
            <person name="Seshadri R."/>
            <person name="Myers G.S.A."/>
            <person name="Tettelin H."/>
            <person name="Eisen J.A."/>
            <person name="Heidelberg J.F."/>
            <person name="Dodson R.J."/>
            <person name="Davidsen T.M."/>
            <person name="DeBoy R.T."/>
            <person name="Fouts D.E."/>
            <person name="Haft D.H."/>
            <person name="Selengut J."/>
            <person name="Ren Q."/>
            <person name="Brinkac L.M."/>
            <person name="Madupu R."/>
            <person name="Kolonay J.F."/>
            <person name="Durkin S.A."/>
            <person name="Daugherty S.C."/>
            <person name="Shetty J."/>
            <person name="Shvartsbeyn A."/>
            <person name="Gebregeorgis E."/>
            <person name="Geer K."/>
            <person name="Tsegaye G."/>
            <person name="Malek J.A."/>
            <person name="Ayodeji B."/>
            <person name="Shatsman S."/>
            <person name="McLeod M.P."/>
            <person name="Smajs D."/>
            <person name="Howell J.K."/>
            <person name="Pal S."/>
            <person name="Amin A."/>
            <person name="Vashisth P."/>
            <person name="McNeill T.Z."/>
            <person name="Xiang Q."/>
            <person name="Sodergren E."/>
            <person name="Baca E."/>
            <person name="Weinstock G.M."/>
            <person name="Norris S.J."/>
            <person name="Fraser C.M."/>
            <person name="Paulsen I.T."/>
        </authorList>
    </citation>
    <scope>NUCLEOTIDE SEQUENCE [LARGE SCALE GENOMIC DNA]</scope>
    <source>
        <strain>ATCC 35405 / DSM 14222 / CIP 103919 / JCM 8153 / KCTC 15104</strain>
    </source>
</reference>
<accession>Q73PM4</accession>
<organism>
    <name type="scientific">Treponema denticola (strain ATCC 35405 / DSM 14222 / CIP 103919 / JCM 8153 / KCTC 15104)</name>
    <dbReference type="NCBI Taxonomy" id="243275"/>
    <lineage>
        <taxon>Bacteria</taxon>
        <taxon>Pseudomonadati</taxon>
        <taxon>Spirochaetota</taxon>
        <taxon>Spirochaetia</taxon>
        <taxon>Spirochaetales</taxon>
        <taxon>Treponemataceae</taxon>
        <taxon>Treponema</taxon>
    </lineage>
</organism>
<proteinExistence type="inferred from homology"/>
<name>RL29_TREDE</name>
<feature type="chain" id="PRO_0000130486" description="Large ribosomal subunit protein uL29">
    <location>
        <begin position="1"/>
        <end position="69"/>
    </location>
</feature>